<protein>
    <recommendedName>
        <fullName evidence="1">Ureidoacrylate amidohydrolase RutB</fullName>
        <ecNumber evidence="1">3.5.1.110</ecNumber>
    </recommendedName>
</protein>
<keyword id="KW-0378">Hydrolase</keyword>
<keyword id="KW-1185">Reference proteome</keyword>
<comment type="function">
    <text evidence="1">Hydrolyzes ureidoacrylate to form aminoacrylate and carbamate. The carbamate hydrolyzes spontaneously, thereby releasing one of the nitrogen atoms of the pyrimidine ring as ammonia and one of its carbon atoms as CO2.</text>
</comment>
<comment type="catalytic activity">
    <reaction evidence="1">
        <text>(Z)-3-ureidoacrylate + H2O + H(+) = (Z)-3-aminoacrylate + NH4(+) + CO2</text>
        <dbReference type="Rhea" id="RHEA:42624"/>
        <dbReference type="ChEBI" id="CHEBI:15377"/>
        <dbReference type="ChEBI" id="CHEBI:15378"/>
        <dbReference type="ChEBI" id="CHEBI:16526"/>
        <dbReference type="ChEBI" id="CHEBI:28938"/>
        <dbReference type="ChEBI" id="CHEBI:59891"/>
        <dbReference type="ChEBI" id="CHEBI:59894"/>
        <dbReference type="EC" id="3.5.1.110"/>
    </reaction>
</comment>
<comment type="catalytic activity">
    <reaction evidence="1">
        <text>(Z)-3-ureidoacrylate + H2O = (Z)-3-aminoacrylate + carbamate + H(+)</text>
        <dbReference type="Rhea" id="RHEA:31603"/>
        <dbReference type="ChEBI" id="CHEBI:13941"/>
        <dbReference type="ChEBI" id="CHEBI:15377"/>
        <dbReference type="ChEBI" id="CHEBI:15378"/>
        <dbReference type="ChEBI" id="CHEBI:59891"/>
        <dbReference type="ChEBI" id="CHEBI:59894"/>
    </reaction>
</comment>
<comment type="catalytic activity">
    <reaction evidence="1">
        <text>(Z)-2-methylureidoacrylate + H2O + H(+) = (Z)-2-methylaminoacrylate + NH4(+) + CO2</text>
        <dbReference type="Rhea" id="RHEA:42620"/>
        <dbReference type="ChEBI" id="CHEBI:15377"/>
        <dbReference type="ChEBI" id="CHEBI:15378"/>
        <dbReference type="ChEBI" id="CHEBI:16526"/>
        <dbReference type="ChEBI" id="CHEBI:28938"/>
        <dbReference type="ChEBI" id="CHEBI:143783"/>
        <dbReference type="ChEBI" id="CHEBI:145735"/>
        <dbReference type="EC" id="3.5.1.110"/>
    </reaction>
</comment>
<comment type="induction">
    <text evidence="1">Up-regulated by the nitrogen regulatory protein C (NtrC also called GlnG) and repressed by RutR.</text>
</comment>
<comment type="similarity">
    <text evidence="1">Belongs to the isochorismatase family. RutB subfamily.</text>
</comment>
<proteinExistence type="inferred from homology"/>
<name>RUTB_ECO55</name>
<accession>B7LFC1</accession>
<sequence length="230" mass="25229">MTTLTARPEAITFDPQQSALIVVDMQNAYATPGGYLDLAGFDVSTTRPVIANIQTAVTAARAAGMLIIWFQNGWDEQYVEAGGPGSPNFHKSNALKTMRKQPQLQGKLLAKGSWDYQLVDELVPQPGDIVLPKPRYSGFFNTPLDSILRSRGIRHLVFTGIATNVCVESTLRDGFFLEYFGVVLEDATHQAGPEFAQKAALFNIETFFGWVSDVETFCDALSPTSFARIA</sequence>
<dbReference type="EC" id="3.5.1.110" evidence="1"/>
<dbReference type="EMBL" id="CU928145">
    <property type="protein sequence ID" value="CAU96983.1"/>
    <property type="molecule type" value="Genomic_DNA"/>
</dbReference>
<dbReference type="RefSeq" id="WP_001307708.1">
    <property type="nucleotide sequence ID" value="NC_011748.1"/>
</dbReference>
<dbReference type="SMR" id="B7LFC1"/>
<dbReference type="GeneID" id="93776399"/>
<dbReference type="KEGG" id="eck:EC55989_1122"/>
<dbReference type="HOGENOM" id="CLU_068979_8_0_6"/>
<dbReference type="Proteomes" id="UP000000746">
    <property type="component" value="Chromosome"/>
</dbReference>
<dbReference type="GO" id="GO:0016811">
    <property type="term" value="F:hydrolase activity, acting on carbon-nitrogen (but not peptide) bonds, in linear amides"/>
    <property type="evidence" value="ECO:0007669"/>
    <property type="project" value="UniProtKB-UniRule"/>
</dbReference>
<dbReference type="GO" id="GO:0019740">
    <property type="term" value="P:nitrogen utilization"/>
    <property type="evidence" value="ECO:0007669"/>
    <property type="project" value="UniProtKB-UniRule"/>
</dbReference>
<dbReference type="GO" id="GO:0006212">
    <property type="term" value="P:uracil catabolic process"/>
    <property type="evidence" value="ECO:0007669"/>
    <property type="project" value="UniProtKB-UniRule"/>
</dbReference>
<dbReference type="CDD" id="cd00431">
    <property type="entry name" value="cysteine_hydrolases"/>
    <property type="match status" value="1"/>
</dbReference>
<dbReference type="FunFam" id="3.40.50.850:FF:000004">
    <property type="entry name" value="Peroxyureidoacrylate/ureidoacrylate amidohydrolase RutB"/>
    <property type="match status" value="1"/>
</dbReference>
<dbReference type="Gene3D" id="3.40.50.850">
    <property type="entry name" value="Isochorismatase-like"/>
    <property type="match status" value="1"/>
</dbReference>
<dbReference type="HAMAP" id="MF_00830">
    <property type="entry name" value="RutB"/>
    <property type="match status" value="1"/>
</dbReference>
<dbReference type="InterPro" id="IPR000868">
    <property type="entry name" value="Isochorismatase-like_dom"/>
</dbReference>
<dbReference type="InterPro" id="IPR050272">
    <property type="entry name" value="Isochorismatase-like_hydrls"/>
</dbReference>
<dbReference type="InterPro" id="IPR036380">
    <property type="entry name" value="Isochorismatase-like_sf"/>
</dbReference>
<dbReference type="InterPro" id="IPR019916">
    <property type="entry name" value="RutB"/>
</dbReference>
<dbReference type="NCBIfam" id="TIGR03614">
    <property type="entry name" value="RutB"/>
    <property type="match status" value="1"/>
</dbReference>
<dbReference type="PANTHER" id="PTHR43540:SF6">
    <property type="entry name" value="ISOCHORISMATASE-LIKE DOMAIN-CONTAINING PROTEIN"/>
    <property type="match status" value="1"/>
</dbReference>
<dbReference type="PANTHER" id="PTHR43540">
    <property type="entry name" value="PEROXYUREIDOACRYLATE/UREIDOACRYLATE AMIDOHYDROLASE-RELATED"/>
    <property type="match status" value="1"/>
</dbReference>
<dbReference type="Pfam" id="PF00857">
    <property type="entry name" value="Isochorismatase"/>
    <property type="match status" value="1"/>
</dbReference>
<dbReference type="SUPFAM" id="SSF52499">
    <property type="entry name" value="Isochorismatase-like hydrolases"/>
    <property type="match status" value="1"/>
</dbReference>
<organism>
    <name type="scientific">Escherichia coli (strain 55989 / EAEC)</name>
    <dbReference type="NCBI Taxonomy" id="585055"/>
    <lineage>
        <taxon>Bacteria</taxon>
        <taxon>Pseudomonadati</taxon>
        <taxon>Pseudomonadota</taxon>
        <taxon>Gammaproteobacteria</taxon>
        <taxon>Enterobacterales</taxon>
        <taxon>Enterobacteriaceae</taxon>
        <taxon>Escherichia</taxon>
    </lineage>
</organism>
<evidence type="ECO:0000255" key="1">
    <source>
        <dbReference type="HAMAP-Rule" id="MF_00830"/>
    </source>
</evidence>
<gene>
    <name evidence="1" type="primary">rutB</name>
    <name type="ordered locus">EC55989_1122</name>
</gene>
<reference key="1">
    <citation type="journal article" date="2009" name="PLoS Genet.">
        <title>Organised genome dynamics in the Escherichia coli species results in highly diverse adaptive paths.</title>
        <authorList>
            <person name="Touchon M."/>
            <person name="Hoede C."/>
            <person name="Tenaillon O."/>
            <person name="Barbe V."/>
            <person name="Baeriswyl S."/>
            <person name="Bidet P."/>
            <person name="Bingen E."/>
            <person name="Bonacorsi S."/>
            <person name="Bouchier C."/>
            <person name="Bouvet O."/>
            <person name="Calteau A."/>
            <person name="Chiapello H."/>
            <person name="Clermont O."/>
            <person name="Cruveiller S."/>
            <person name="Danchin A."/>
            <person name="Diard M."/>
            <person name="Dossat C."/>
            <person name="Karoui M.E."/>
            <person name="Frapy E."/>
            <person name="Garry L."/>
            <person name="Ghigo J.M."/>
            <person name="Gilles A.M."/>
            <person name="Johnson J."/>
            <person name="Le Bouguenec C."/>
            <person name="Lescat M."/>
            <person name="Mangenot S."/>
            <person name="Martinez-Jehanne V."/>
            <person name="Matic I."/>
            <person name="Nassif X."/>
            <person name="Oztas S."/>
            <person name="Petit M.A."/>
            <person name="Pichon C."/>
            <person name="Rouy Z."/>
            <person name="Ruf C.S."/>
            <person name="Schneider D."/>
            <person name="Tourret J."/>
            <person name="Vacherie B."/>
            <person name="Vallenet D."/>
            <person name="Medigue C."/>
            <person name="Rocha E.P.C."/>
            <person name="Denamur E."/>
        </authorList>
    </citation>
    <scope>NUCLEOTIDE SEQUENCE [LARGE SCALE GENOMIC DNA]</scope>
    <source>
        <strain>55989 / EAEC</strain>
    </source>
</reference>
<feature type="chain" id="PRO_0000402656" description="Ureidoacrylate amidohydrolase RutB">
    <location>
        <begin position="1"/>
        <end position="230"/>
    </location>
</feature>
<feature type="active site" description="Proton acceptor" evidence="1">
    <location>
        <position position="24"/>
    </location>
</feature>
<feature type="active site" evidence="1">
    <location>
        <position position="133"/>
    </location>
</feature>
<feature type="active site" description="Nucleophile" evidence="1">
    <location>
        <position position="166"/>
    </location>
</feature>